<organism>
    <name type="scientific">Macaca fuscata fuscata</name>
    <name type="common">Japanese macaque</name>
    <dbReference type="NCBI Taxonomy" id="9543"/>
    <lineage>
        <taxon>Eukaryota</taxon>
        <taxon>Metazoa</taxon>
        <taxon>Chordata</taxon>
        <taxon>Craniata</taxon>
        <taxon>Vertebrata</taxon>
        <taxon>Euteleostomi</taxon>
        <taxon>Mammalia</taxon>
        <taxon>Eutheria</taxon>
        <taxon>Euarchontoglires</taxon>
        <taxon>Primates</taxon>
        <taxon>Haplorrhini</taxon>
        <taxon>Catarrhini</taxon>
        <taxon>Cercopithecidae</taxon>
        <taxon>Cercopithecinae</taxon>
        <taxon>Macaca</taxon>
    </lineage>
</organism>
<proteinExistence type="evidence at transcript level"/>
<feature type="chain" id="PRO_0000066621" description="Glutathione peroxidase 2">
    <location>
        <begin position="1"/>
        <end position="190"/>
    </location>
</feature>
<feature type="active site" evidence="1">
    <location>
        <position position="40"/>
    </location>
</feature>
<feature type="non-standard amino acid" description="Selenocysteine" evidence="1">
    <location>
        <position position="40"/>
    </location>
</feature>
<comment type="function">
    <text evidence="2">Catalyzes the reduction of hydroperoxides in a glutathione-dependent manner thus regulating cellular redox homeostasis. Can reduce small soluble hydroperoxides such as H2O2, cumene hydroperoxide and tert-butyl hydroperoxide, as well as several fatty acid-derived hydroperoxides. Cannot reduce phosphatidycholine hydroperoxide.</text>
</comment>
<comment type="catalytic activity">
    <reaction evidence="2">
        <text>2 glutathione + H2O2 = glutathione disulfide + 2 H2O</text>
        <dbReference type="Rhea" id="RHEA:16833"/>
        <dbReference type="ChEBI" id="CHEBI:15377"/>
        <dbReference type="ChEBI" id="CHEBI:16240"/>
        <dbReference type="ChEBI" id="CHEBI:57925"/>
        <dbReference type="ChEBI" id="CHEBI:58297"/>
        <dbReference type="EC" id="1.11.1.9"/>
    </reaction>
    <physiologicalReaction direction="left-to-right" evidence="2">
        <dbReference type="Rhea" id="RHEA:16834"/>
    </physiologicalReaction>
</comment>
<comment type="catalytic activity">
    <reaction evidence="2">
        <text>a hydroperoxy polyunsaturated fatty acid + 2 glutathione = a hydroxy polyunsaturated fatty acid + glutathione disulfide + H2O</text>
        <dbReference type="Rhea" id="RHEA:19057"/>
        <dbReference type="ChEBI" id="CHEBI:15377"/>
        <dbReference type="ChEBI" id="CHEBI:57925"/>
        <dbReference type="ChEBI" id="CHEBI:58297"/>
        <dbReference type="ChEBI" id="CHEBI:131871"/>
        <dbReference type="ChEBI" id="CHEBI:134019"/>
        <dbReference type="EC" id="1.11.1.12"/>
    </reaction>
    <physiologicalReaction direction="left-to-right" evidence="2">
        <dbReference type="Rhea" id="RHEA:19058"/>
    </physiologicalReaction>
</comment>
<comment type="catalytic activity">
    <reaction evidence="2">
        <text>tert-butyl hydroperoxide + 2 glutathione = tert-butanol + glutathione disulfide + H2O</text>
        <dbReference type="Rhea" id="RHEA:69412"/>
        <dbReference type="ChEBI" id="CHEBI:15377"/>
        <dbReference type="ChEBI" id="CHEBI:45895"/>
        <dbReference type="ChEBI" id="CHEBI:57925"/>
        <dbReference type="ChEBI" id="CHEBI:58297"/>
        <dbReference type="ChEBI" id="CHEBI:64090"/>
    </reaction>
    <physiologicalReaction direction="left-to-right" evidence="2">
        <dbReference type="Rhea" id="RHEA:69413"/>
    </physiologicalReaction>
</comment>
<comment type="catalytic activity">
    <reaction evidence="2">
        <text>cumene hydroperoxide + 2 glutathione = 2-phenylpropan-2-ol + glutathione disulfide + H2O</text>
        <dbReference type="Rhea" id="RHEA:69651"/>
        <dbReference type="ChEBI" id="CHEBI:15377"/>
        <dbReference type="ChEBI" id="CHEBI:57925"/>
        <dbReference type="ChEBI" id="CHEBI:58297"/>
        <dbReference type="ChEBI" id="CHEBI:78673"/>
        <dbReference type="ChEBI" id="CHEBI:131607"/>
    </reaction>
    <physiologicalReaction direction="left-to-right" evidence="2">
        <dbReference type="Rhea" id="RHEA:69652"/>
    </physiologicalReaction>
</comment>
<comment type="catalytic activity">
    <reaction evidence="2">
        <text>(13S)-hydroperoxy-(9Z,11E)-octadecadienoate + 2 glutathione = (13S)-hydroxy-(9Z,11E)-octadecadienoate + glutathione disulfide + H2O</text>
        <dbReference type="Rhea" id="RHEA:48888"/>
        <dbReference type="ChEBI" id="CHEBI:15377"/>
        <dbReference type="ChEBI" id="CHEBI:57466"/>
        <dbReference type="ChEBI" id="CHEBI:57925"/>
        <dbReference type="ChEBI" id="CHEBI:58297"/>
        <dbReference type="ChEBI" id="CHEBI:90850"/>
    </reaction>
    <physiologicalReaction direction="left-to-right" evidence="2">
        <dbReference type="Rhea" id="RHEA:48889"/>
    </physiologicalReaction>
</comment>
<comment type="catalytic activity">
    <reaction evidence="2">
        <text>(5S)-hydroperoxy-(6E,8Z,11Z,14Z)-eicosatetraenoate + 2 glutathione = (5S)-hydroxy-(6E,8Z,11Z,14Z)-eicosatetraenoate + glutathione disulfide + H2O</text>
        <dbReference type="Rhea" id="RHEA:48620"/>
        <dbReference type="ChEBI" id="CHEBI:15377"/>
        <dbReference type="ChEBI" id="CHEBI:57450"/>
        <dbReference type="ChEBI" id="CHEBI:57925"/>
        <dbReference type="ChEBI" id="CHEBI:58297"/>
        <dbReference type="ChEBI" id="CHEBI:90632"/>
    </reaction>
    <physiologicalReaction direction="left-to-right" evidence="2">
        <dbReference type="Rhea" id="RHEA:48621"/>
    </physiologicalReaction>
</comment>
<comment type="catalytic activity">
    <reaction evidence="2">
        <text>(12R)-hydroperoxy-(5Z,8Z,10E,14Z)-eicosatetraenoate + 2 glutathione = (12R)-hydroxy-(5Z,8Z,10E,14Z)-eicosatetraenoate + glutathione disulfide + H2O</text>
        <dbReference type="Rhea" id="RHEA:76691"/>
        <dbReference type="ChEBI" id="CHEBI:15377"/>
        <dbReference type="ChEBI" id="CHEBI:57925"/>
        <dbReference type="ChEBI" id="CHEBI:58297"/>
        <dbReference type="ChEBI" id="CHEBI:75230"/>
        <dbReference type="ChEBI" id="CHEBI:83343"/>
    </reaction>
    <physiologicalReaction direction="left-to-right" evidence="2">
        <dbReference type="Rhea" id="RHEA:76692"/>
    </physiologicalReaction>
</comment>
<comment type="catalytic activity">
    <reaction evidence="2">
        <text>(15S)-hydroperoxy-(5Z,8Z,11Z,13E)-eicosatetraenoate + 2 glutathione = (15S)-hydroxy-(5Z,8Z,11Z,13E)-eicosatetraenoate + glutathione disulfide + H2O</text>
        <dbReference type="Rhea" id="RHEA:76695"/>
        <dbReference type="ChEBI" id="CHEBI:15377"/>
        <dbReference type="ChEBI" id="CHEBI:57409"/>
        <dbReference type="ChEBI" id="CHEBI:57446"/>
        <dbReference type="ChEBI" id="CHEBI:57925"/>
        <dbReference type="ChEBI" id="CHEBI:58297"/>
    </reaction>
    <physiologicalReaction direction="left-to-right" evidence="2">
        <dbReference type="Rhea" id="RHEA:76696"/>
    </physiologicalReaction>
</comment>
<comment type="subunit">
    <text evidence="2">Homotetramer.</text>
</comment>
<comment type="subcellular location">
    <subcellularLocation>
        <location evidence="2">Cytoplasm</location>
        <location evidence="2">Cytosol</location>
    </subcellularLocation>
</comment>
<comment type="tissue specificity">
    <text evidence="3">Exclusively expressed in the stomach and small intestine.</text>
</comment>
<comment type="similarity">
    <text evidence="4">Belongs to the glutathione peroxidase family.</text>
</comment>
<gene>
    <name type="primary">GPX2</name>
</gene>
<reference key="1">
    <citation type="journal article" date="2005" name="Comp. Biochem. Physiol.">
        <title>Structure, gene expression, and evolution of primate glutathione peroxidases.</title>
        <authorList>
            <person name="Fukuhara R."/>
            <person name="Kageyama T."/>
        </authorList>
    </citation>
    <scope>NUCLEOTIDE SEQUENCE [MRNA]</scope>
    <scope>TISSUE SPECIFICITY</scope>
</reference>
<sequence length="190" mass="21970">MAFIAKSFYDLSAISLDGEKVDFNTFRGRAVLIENVASLUGTTTRDFTQLNELQCRFPRRLVVLGFPCNQFGHQENCQNEEILNSLKYVRPGGGYQPTFTLVQKCEVNGQNEHPVFAYLKDKLPYPHDDPFSLMTDPKLIIWSPVRRSDVAWNFEKFLIGPEVEPFRRYSRTFPTINIEPDIKRLLKVAI</sequence>
<name>GPX2_MACFU</name>
<evidence type="ECO:0000250" key="1">
    <source>
        <dbReference type="UniProtKB" id="O70325"/>
    </source>
</evidence>
<evidence type="ECO:0000250" key="2">
    <source>
        <dbReference type="UniProtKB" id="P18283"/>
    </source>
</evidence>
<evidence type="ECO:0000269" key="3">
    <source>
    </source>
</evidence>
<evidence type="ECO:0000305" key="4"/>
<protein>
    <recommendedName>
        <fullName>Glutathione peroxidase 2</fullName>
        <shortName>GPx-2</shortName>
        <shortName>GSHPx-2</shortName>
        <ecNumber evidence="2">1.11.1.9</ecNumber>
    </recommendedName>
    <alternativeName>
        <fullName>Glutathione peroxidase-gastrointestinal</fullName>
        <shortName>GPx-GI</shortName>
        <shortName>GSHPx-GI</shortName>
    </alternativeName>
    <alternativeName>
        <fullName>Phospholipid hydroperoxide glutathione peroxidase GPX2</fullName>
        <ecNumber evidence="2">1.11.1.12</ecNumber>
    </alternativeName>
</protein>
<dbReference type="EC" id="1.11.1.9" evidence="2"/>
<dbReference type="EC" id="1.11.1.12" evidence="2"/>
<dbReference type="EMBL" id="AB121003">
    <property type="protein sequence ID" value="BAE17012.1"/>
    <property type="molecule type" value="mRNA"/>
</dbReference>
<dbReference type="PeroxiBase" id="3705">
    <property type="entry name" value="MfGPx02"/>
</dbReference>
<dbReference type="GO" id="GO:0005829">
    <property type="term" value="C:cytosol"/>
    <property type="evidence" value="ECO:0007669"/>
    <property type="project" value="UniProtKB-SubCell"/>
</dbReference>
<dbReference type="GO" id="GO:0004602">
    <property type="term" value="F:glutathione peroxidase activity"/>
    <property type="evidence" value="ECO:0000250"/>
    <property type="project" value="UniProtKB"/>
</dbReference>
<dbReference type="GO" id="GO:0047066">
    <property type="term" value="F:phospholipid-hydroperoxide glutathione peroxidase activity"/>
    <property type="evidence" value="ECO:0007669"/>
    <property type="project" value="RHEA"/>
</dbReference>
<dbReference type="GO" id="GO:0006979">
    <property type="term" value="P:response to oxidative stress"/>
    <property type="evidence" value="ECO:0007669"/>
    <property type="project" value="InterPro"/>
</dbReference>
<dbReference type="CDD" id="cd00340">
    <property type="entry name" value="GSH_Peroxidase"/>
    <property type="match status" value="1"/>
</dbReference>
<dbReference type="FunFam" id="3.40.30.10:FF:000151">
    <property type="entry name" value="Glutathione peroxidase"/>
    <property type="match status" value="1"/>
</dbReference>
<dbReference type="Gene3D" id="3.40.30.10">
    <property type="entry name" value="Glutaredoxin"/>
    <property type="match status" value="1"/>
</dbReference>
<dbReference type="InterPro" id="IPR000889">
    <property type="entry name" value="Glutathione_peroxidase"/>
</dbReference>
<dbReference type="InterPro" id="IPR029759">
    <property type="entry name" value="GPX_AS"/>
</dbReference>
<dbReference type="InterPro" id="IPR029760">
    <property type="entry name" value="GPX_CS"/>
</dbReference>
<dbReference type="InterPro" id="IPR036249">
    <property type="entry name" value="Thioredoxin-like_sf"/>
</dbReference>
<dbReference type="PANTHER" id="PTHR11592">
    <property type="entry name" value="GLUTATHIONE PEROXIDASE"/>
    <property type="match status" value="1"/>
</dbReference>
<dbReference type="PANTHER" id="PTHR11592:SF36">
    <property type="entry name" value="GLUTATHIONE PEROXIDASE 2"/>
    <property type="match status" value="1"/>
</dbReference>
<dbReference type="Pfam" id="PF00255">
    <property type="entry name" value="GSHPx"/>
    <property type="match status" value="1"/>
</dbReference>
<dbReference type="PIRSF" id="PIRSF000303">
    <property type="entry name" value="Glutathion_perox"/>
    <property type="match status" value="1"/>
</dbReference>
<dbReference type="PRINTS" id="PR01011">
    <property type="entry name" value="GLUTPROXDASE"/>
</dbReference>
<dbReference type="SUPFAM" id="SSF52833">
    <property type="entry name" value="Thioredoxin-like"/>
    <property type="match status" value="1"/>
</dbReference>
<dbReference type="PROSITE" id="PS00460">
    <property type="entry name" value="GLUTATHIONE_PEROXID_1"/>
    <property type="match status" value="1"/>
</dbReference>
<dbReference type="PROSITE" id="PS00763">
    <property type="entry name" value="GLUTATHIONE_PEROXID_2"/>
    <property type="match status" value="1"/>
</dbReference>
<dbReference type="PROSITE" id="PS51355">
    <property type="entry name" value="GLUTATHIONE_PEROXID_3"/>
    <property type="match status" value="1"/>
</dbReference>
<accession>Q4AEH8</accession>
<keyword id="KW-0963">Cytoplasm</keyword>
<keyword id="KW-0560">Oxidoreductase</keyword>
<keyword id="KW-0575">Peroxidase</keyword>
<keyword id="KW-0712">Selenocysteine</keyword>